<accession>A4Y3J7</accession>
<comment type="function">
    <text evidence="1">Catalyzes the NADPH-dependent reduction of glutamyl-tRNA(Glu) to glutamate 1-semialdehyde (GSA).</text>
</comment>
<comment type="catalytic activity">
    <reaction evidence="1">
        <text>(S)-4-amino-5-oxopentanoate + tRNA(Glu) + NADP(+) = L-glutamyl-tRNA(Glu) + NADPH + H(+)</text>
        <dbReference type="Rhea" id="RHEA:12344"/>
        <dbReference type="Rhea" id="RHEA-COMP:9663"/>
        <dbReference type="Rhea" id="RHEA-COMP:9680"/>
        <dbReference type="ChEBI" id="CHEBI:15378"/>
        <dbReference type="ChEBI" id="CHEBI:57501"/>
        <dbReference type="ChEBI" id="CHEBI:57783"/>
        <dbReference type="ChEBI" id="CHEBI:58349"/>
        <dbReference type="ChEBI" id="CHEBI:78442"/>
        <dbReference type="ChEBI" id="CHEBI:78520"/>
        <dbReference type="EC" id="1.2.1.70"/>
    </reaction>
</comment>
<comment type="pathway">
    <text evidence="1">Porphyrin-containing compound metabolism; protoporphyrin-IX biosynthesis; 5-aminolevulinate from L-glutamyl-tRNA(Glu): step 1/2.</text>
</comment>
<comment type="subunit">
    <text evidence="1">Homodimer.</text>
</comment>
<comment type="domain">
    <text evidence="1">Possesses an unusual extended V-shaped dimeric structure with each monomer consisting of three distinct domains arranged along a curved 'spinal' alpha-helix. The N-terminal catalytic domain specifically recognizes the glutamate moiety of the substrate. The second domain is the NADPH-binding domain, and the third C-terminal domain is responsible for dimerization.</text>
</comment>
<comment type="miscellaneous">
    <text evidence="1">During catalysis, the active site Cys acts as a nucleophile attacking the alpha-carbonyl group of tRNA-bound glutamate with the formation of a thioester intermediate between enzyme and glutamate, and the concomitant release of tRNA(Glu). The thioester intermediate is finally reduced by direct hydride transfer from NADPH, to form the product GSA.</text>
</comment>
<comment type="similarity">
    <text evidence="1">Belongs to the glutamyl-tRNA reductase family.</text>
</comment>
<protein>
    <recommendedName>
        <fullName evidence="1">Glutamyl-tRNA reductase</fullName>
        <shortName evidence="1">GluTR</shortName>
        <ecNumber evidence="1">1.2.1.70</ecNumber>
    </recommendedName>
</protein>
<organism>
    <name type="scientific">Shewanella putrefaciens (strain CN-32 / ATCC BAA-453)</name>
    <dbReference type="NCBI Taxonomy" id="319224"/>
    <lineage>
        <taxon>Bacteria</taxon>
        <taxon>Pseudomonadati</taxon>
        <taxon>Pseudomonadota</taxon>
        <taxon>Gammaproteobacteria</taxon>
        <taxon>Alteromonadales</taxon>
        <taxon>Shewanellaceae</taxon>
        <taxon>Shewanella</taxon>
    </lineage>
</organism>
<gene>
    <name evidence="1" type="primary">hemA</name>
    <name type="ordered locus">Sputcn32_0800</name>
</gene>
<sequence length="416" mass="45487">MSLVAIGINHKTATVDLREKVAFSPDKIHDAMKSLASRTRSGEAVIVSTCNRTELYCNNGDEADIIEWLEEYHGLDHKDVAPCLYNYHGQTAVKHLMRVASGLDSLILGEPQILGQVKQAFAKAKEAGTVALTIDRLFQNTFSVAKKVRTETEIGAAAVSVAFAAVSMAKHIFSSLSTTKVLLIGAGETIELVAKHLKDNGVASMVVANRTLERAQGMCEEFGATAITLAQIPDYLPKADIVISSTASPLPILGKGMVEKALKQRRHQPMLLVDIAVPRDIEPEVADLDDAFLYTVDDLHSIIEQNMASRKEAAEQAELITEEQSYLFMDWVRSLESVDSIREYRNQSMAIKDELVERALNKLAQGGDTEQVLIELANRLTNKLIHAPTQALTAASRQGDLNTLGQLRTALGLDKN</sequence>
<name>HEM1_SHEPC</name>
<proteinExistence type="inferred from homology"/>
<dbReference type="EC" id="1.2.1.70" evidence="1"/>
<dbReference type="EMBL" id="CP000681">
    <property type="protein sequence ID" value="ABP74530.1"/>
    <property type="molecule type" value="Genomic_DNA"/>
</dbReference>
<dbReference type="SMR" id="A4Y3J7"/>
<dbReference type="STRING" id="319224.Sputcn32_0800"/>
<dbReference type="KEGG" id="spc:Sputcn32_0800"/>
<dbReference type="eggNOG" id="COG0373">
    <property type="taxonomic scope" value="Bacteria"/>
</dbReference>
<dbReference type="HOGENOM" id="CLU_035113_2_2_6"/>
<dbReference type="UniPathway" id="UPA00251">
    <property type="reaction ID" value="UER00316"/>
</dbReference>
<dbReference type="GO" id="GO:0008883">
    <property type="term" value="F:glutamyl-tRNA reductase activity"/>
    <property type="evidence" value="ECO:0007669"/>
    <property type="project" value="UniProtKB-UniRule"/>
</dbReference>
<dbReference type="GO" id="GO:0050661">
    <property type="term" value="F:NADP binding"/>
    <property type="evidence" value="ECO:0007669"/>
    <property type="project" value="InterPro"/>
</dbReference>
<dbReference type="GO" id="GO:0019353">
    <property type="term" value="P:protoporphyrinogen IX biosynthetic process from glutamate"/>
    <property type="evidence" value="ECO:0007669"/>
    <property type="project" value="TreeGrafter"/>
</dbReference>
<dbReference type="CDD" id="cd05213">
    <property type="entry name" value="NAD_bind_Glutamyl_tRNA_reduct"/>
    <property type="match status" value="1"/>
</dbReference>
<dbReference type="FunFam" id="3.30.460.30:FF:000001">
    <property type="entry name" value="Glutamyl-tRNA reductase"/>
    <property type="match status" value="1"/>
</dbReference>
<dbReference type="FunFam" id="3.40.50.720:FF:000031">
    <property type="entry name" value="Glutamyl-tRNA reductase"/>
    <property type="match status" value="1"/>
</dbReference>
<dbReference type="Gene3D" id="3.30.460.30">
    <property type="entry name" value="Glutamyl-tRNA reductase, N-terminal domain"/>
    <property type="match status" value="1"/>
</dbReference>
<dbReference type="Gene3D" id="3.40.50.720">
    <property type="entry name" value="NAD(P)-binding Rossmann-like Domain"/>
    <property type="match status" value="1"/>
</dbReference>
<dbReference type="HAMAP" id="MF_00087">
    <property type="entry name" value="Glu_tRNA_reductase"/>
    <property type="match status" value="1"/>
</dbReference>
<dbReference type="InterPro" id="IPR000343">
    <property type="entry name" value="4pyrrol_synth_GluRdtase"/>
</dbReference>
<dbReference type="InterPro" id="IPR015896">
    <property type="entry name" value="4pyrrol_synth_GluRdtase_dimer"/>
</dbReference>
<dbReference type="InterPro" id="IPR015895">
    <property type="entry name" value="4pyrrol_synth_GluRdtase_N"/>
</dbReference>
<dbReference type="InterPro" id="IPR018214">
    <property type="entry name" value="GluRdtase_CS"/>
</dbReference>
<dbReference type="InterPro" id="IPR036453">
    <property type="entry name" value="GluRdtase_dimer_dom_sf"/>
</dbReference>
<dbReference type="InterPro" id="IPR036343">
    <property type="entry name" value="GluRdtase_N_sf"/>
</dbReference>
<dbReference type="InterPro" id="IPR036291">
    <property type="entry name" value="NAD(P)-bd_dom_sf"/>
</dbReference>
<dbReference type="InterPro" id="IPR006151">
    <property type="entry name" value="Shikm_DH/Glu-tRNA_Rdtase"/>
</dbReference>
<dbReference type="NCBIfam" id="TIGR01035">
    <property type="entry name" value="hemA"/>
    <property type="match status" value="1"/>
</dbReference>
<dbReference type="PANTHER" id="PTHR43013">
    <property type="entry name" value="GLUTAMYL-TRNA REDUCTASE"/>
    <property type="match status" value="1"/>
</dbReference>
<dbReference type="PANTHER" id="PTHR43013:SF1">
    <property type="entry name" value="GLUTAMYL-TRNA REDUCTASE"/>
    <property type="match status" value="1"/>
</dbReference>
<dbReference type="Pfam" id="PF00745">
    <property type="entry name" value="GlutR_dimer"/>
    <property type="match status" value="1"/>
</dbReference>
<dbReference type="Pfam" id="PF05201">
    <property type="entry name" value="GlutR_N"/>
    <property type="match status" value="1"/>
</dbReference>
<dbReference type="Pfam" id="PF01488">
    <property type="entry name" value="Shikimate_DH"/>
    <property type="match status" value="1"/>
</dbReference>
<dbReference type="PIRSF" id="PIRSF000445">
    <property type="entry name" value="4pyrrol_synth_GluRdtase"/>
    <property type="match status" value="1"/>
</dbReference>
<dbReference type="SUPFAM" id="SSF69742">
    <property type="entry name" value="Glutamyl tRNA-reductase catalytic, N-terminal domain"/>
    <property type="match status" value="1"/>
</dbReference>
<dbReference type="SUPFAM" id="SSF69075">
    <property type="entry name" value="Glutamyl tRNA-reductase dimerization domain"/>
    <property type="match status" value="1"/>
</dbReference>
<dbReference type="SUPFAM" id="SSF51735">
    <property type="entry name" value="NAD(P)-binding Rossmann-fold domains"/>
    <property type="match status" value="1"/>
</dbReference>
<dbReference type="PROSITE" id="PS00747">
    <property type="entry name" value="GLUTR"/>
    <property type="match status" value="1"/>
</dbReference>
<keyword id="KW-0521">NADP</keyword>
<keyword id="KW-0560">Oxidoreductase</keyword>
<keyword id="KW-0627">Porphyrin biosynthesis</keyword>
<evidence type="ECO:0000255" key="1">
    <source>
        <dbReference type="HAMAP-Rule" id="MF_00087"/>
    </source>
</evidence>
<reference key="1">
    <citation type="submission" date="2007-04" db="EMBL/GenBank/DDBJ databases">
        <title>Complete sequence of Shewanella putrefaciens CN-32.</title>
        <authorList>
            <consortium name="US DOE Joint Genome Institute"/>
            <person name="Copeland A."/>
            <person name="Lucas S."/>
            <person name="Lapidus A."/>
            <person name="Barry K."/>
            <person name="Detter J.C."/>
            <person name="Glavina del Rio T."/>
            <person name="Hammon N."/>
            <person name="Israni S."/>
            <person name="Dalin E."/>
            <person name="Tice H."/>
            <person name="Pitluck S."/>
            <person name="Chain P."/>
            <person name="Malfatti S."/>
            <person name="Shin M."/>
            <person name="Vergez L."/>
            <person name="Schmutz J."/>
            <person name="Larimer F."/>
            <person name="Land M."/>
            <person name="Hauser L."/>
            <person name="Kyrpides N."/>
            <person name="Mikhailova N."/>
            <person name="Romine M.F."/>
            <person name="Fredrickson J."/>
            <person name="Tiedje J."/>
            <person name="Richardson P."/>
        </authorList>
    </citation>
    <scope>NUCLEOTIDE SEQUENCE [LARGE SCALE GENOMIC DNA]</scope>
    <source>
        <strain>CN-32 / ATCC BAA-453</strain>
    </source>
</reference>
<feature type="chain" id="PRO_1000004691" description="Glutamyl-tRNA reductase">
    <location>
        <begin position="1"/>
        <end position="416"/>
    </location>
</feature>
<feature type="active site" description="Nucleophile" evidence="1">
    <location>
        <position position="50"/>
    </location>
</feature>
<feature type="binding site" evidence="1">
    <location>
        <begin position="49"/>
        <end position="52"/>
    </location>
    <ligand>
        <name>substrate</name>
    </ligand>
</feature>
<feature type="binding site" evidence="1">
    <location>
        <position position="105"/>
    </location>
    <ligand>
        <name>substrate</name>
    </ligand>
</feature>
<feature type="binding site" evidence="1">
    <location>
        <begin position="110"/>
        <end position="112"/>
    </location>
    <ligand>
        <name>substrate</name>
    </ligand>
</feature>
<feature type="binding site" evidence="1">
    <location>
        <position position="116"/>
    </location>
    <ligand>
        <name>substrate</name>
    </ligand>
</feature>
<feature type="binding site" evidence="1">
    <location>
        <begin position="185"/>
        <end position="190"/>
    </location>
    <ligand>
        <name>NADP(+)</name>
        <dbReference type="ChEBI" id="CHEBI:58349"/>
    </ligand>
</feature>
<feature type="site" description="Important for activity" evidence="1">
    <location>
        <position position="95"/>
    </location>
</feature>